<dbReference type="EMBL" id="AY575014">
    <property type="protein sequence ID" value="AAT81149.1"/>
    <property type="status" value="ALT_INIT"/>
    <property type="molecule type" value="Genomic_DNA"/>
</dbReference>
<dbReference type="EMBL" id="CP009812">
    <property type="protein sequence ID" value="ATZ52718.1"/>
    <property type="molecule type" value="Genomic_DNA"/>
</dbReference>
<dbReference type="RefSeq" id="XP_001553941.1">
    <property type="nucleotide sequence ID" value="XM_001553891.1"/>
</dbReference>
<dbReference type="EnsemblFungi" id="Bcin08g03640.1">
    <property type="protein sequence ID" value="Bcin08p03640.1"/>
    <property type="gene ID" value="Bcin08g03640"/>
</dbReference>
<dbReference type="GeneID" id="5434496"/>
<dbReference type="KEGG" id="bfu:BCIN_08g03640"/>
<dbReference type="VEuPathDB" id="FungiDB:Bcin08g03640"/>
<dbReference type="OrthoDB" id="5393256at2759"/>
<dbReference type="Proteomes" id="UP000001798">
    <property type="component" value="Chromosome bcin08"/>
</dbReference>
<dbReference type="GO" id="GO:0005886">
    <property type="term" value="C:plasma membrane"/>
    <property type="evidence" value="ECO:0007669"/>
    <property type="project" value="UniProtKB-SubCell"/>
</dbReference>
<dbReference type="GO" id="GO:0071467">
    <property type="term" value="P:cellular response to pH"/>
    <property type="evidence" value="ECO:0007669"/>
    <property type="project" value="TreeGrafter"/>
</dbReference>
<dbReference type="InterPro" id="IPR014844">
    <property type="entry name" value="PalH"/>
</dbReference>
<dbReference type="PANTHER" id="PTHR35779">
    <property type="entry name" value="PH-RESPONSE REGULATOR PROTEIN PALH/RIM21"/>
    <property type="match status" value="1"/>
</dbReference>
<dbReference type="PANTHER" id="PTHR35779:SF1">
    <property type="entry name" value="PH-RESPONSE REGULATOR PROTEIN PALH_RIM21"/>
    <property type="match status" value="1"/>
</dbReference>
<dbReference type="Pfam" id="PF08733">
    <property type="entry name" value="PalH"/>
    <property type="match status" value="1"/>
</dbReference>
<sequence>MKMDPRQLINNLKPSSTSAATATHPHCTPFTLPSNGVINLGASEYFTLTTNAIFNPECTGTADIVLTGAGTPTSFVDLRDPFYASTIPACYALAATTVIAYMLVIMLLITPRTFLVQGAVVLGRRGFTNGPSGSDAGIGIGGRPWLQKVAALTVAISLTIATADTFRVAEQQYELGLMNASALQEEVEGGMELKIIRIISDTFLWLAQAQTLIRLFPRQREKIIIKWTGFALISLDVLFSLLNNFVYNGNSRPRLFTDAVPALAYLFQLALSLLYCAWVIYYAISKKRYAFYHPKMRNIFLVAILSLVSVLVPVVFFVLDISKPTLAAWGDYVRWVGAAAASVVVWEWVERIEALERDEKKDGVLGREVFDGDEMLEVTPTSDWTKRFRKDNDDKGGTATGSTWPAMSGLANRYRSHATNDLETGSVPGQRTGRHLLAVRPPLWPTRPQPAATPINRADTASAESTAYTVRYHPISEATPPIISGDTTLSRSNSEAISISRSISNEEVDSDKPVVLEQTNQAAAVAAGLHNWQWNSLNPFKHRVQGPPAEVSLHTAKPPTPFSSHESSNKWDVRARIEGFAATQAERFREKTRPTVDTDPLPLTVIPAPSRRRAVATESEESDTDSISPTPDESSHIEVTTSRRDRPARTTDPYTPDSLNQHSITHRGSISFATAVQPELDQRVENATASPTLVGSRQTPTFSSSRSSPITVRSPVTPSLPPIIDGLPVTTIPAPPRRPRVENP</sequence>
<proteinExistence type="inferred from homology"/>
<gene>
    <name type="primary">palH</name>
    <name type="ORF">BC1G_07501</name>
    <name type="ORF">BCIN_08g03640</name>
</gene>
<protein>
    <recommendedName>
        <fullName>pH-response regulator protein palH/RIM21</fullName>
    </recommendedName>
</protein>
<accession>Q5V9L7</accession>
<accession>A0A384JQ45</accession>
<accession>A6S3X3</accession>
<comment type="function">
    <text evidence="1">Required for the proteolytic cleavage of the transcription factor pacC in response to alkaline ambient pH. Might be a pH sensor (By similarity).</text>
</comment>
<comment type="subcellular location">
    <subcellularLocation>
        <location evidence="1">Cell membrane</location>
        <topology evidence="1">Multi-pass membrane protein</topology>
    </subcellularLocation>
</comment>
<comment type="similarity">
    <text evidence="4">Belongs to the palH/RIM21 family.</text>
</comment>
<comment type="sequence caution" evidence="4">
    <conflict type="erroneous initiation">
        <sequence resource="EMBL-CDS" id="AAT81149"/>
    </conflict>
    <text>Truncated N-terminus.</text>
</comment>
<feature type="chain" id="PRO_0000058196" description="pH-response regulator protein palH/RIM21">
    <location>
        <begin position="1"/>
        <end position="744"/>
    </location>
</feature>
<feature type="transmembrane region" description="Helical" evidence="2">
    <location>
        <begin position="89"/>
        <end position="109"/>
    </location>
</feature>
<feature type="transmembrane region" description="Helical" evidence="2">
    <location>
        <begin position="223"/>
        <end position="243"/>
    </location>
</feature>
<feature type="transmembrane region" description="Helical" evidence="2">
    <location>
        <begin position="260"/>
        <end position="280"/>
    </location>
</feature>
<feature type="transmembrane region" description="Helical" evidence="2">
    <location>
        <begin position="299"/>
        <end position="319"/>
    </location>
</feature>
<feature type="region of interest" description="Disordered" evidence="3">
    <location>
        <begin position="387"/>
        <end position="407"/>
    </location>
</feature>
<feature type="region of interest" description="Disordered" evidence="3">
    <location>
        <begin position="441"/>
        <end position="460"/>
    </location>
</feature>
<feature type="region of interest" description="Disordered" evidence="3">
    <location>
        <begin position="550"/>
        <end position="570"/>
    </location>
</feature>
<feature type="region of interest" description="Disordered" evidence="3">
    <location>
        <begin position="584"/>
        <end position="664"/>
    </location>
</feature>
<feature type="region of interest" description="Disordered" evidence="3">
    <location>
        <begin position="692"/>
        <end position="744"/>
    </location>
</feature>
<feature type="compositionally biased region" description="Basic and acidic residues" evidence="3">
    <location>
        <begin position="387"/>
        <end position="396"/>
    </location>
</feature>
<feature type="compositionally biased region" description="Basic and acidic residues" evidence="3">
    <location>
        <begin position="586"/>
        <end position="596"/>
    </location>
</feature>
<feature type="compositionally biased region" description="Basic and acidic residues" evidence="3">
    <location>
        <begin position="633"/>
        <end position="649"/>
    </location>
</feature>
<feature type="compositionally biased region" description="Low complexity" evidence="3">
    <location>
        <begin position="696"/>
        <end position="715"/>
    </location>
</feature>
<feature type="sequence conflict" description="In Ref. 1; AAT81149." evidence="4" ref="1">
    <original>N</original>
    <variation>S</variation>
    <location>
        <position position="39"/>
    </location>
</feature>
<feature type="sequence conflict" description="In Ref. 1; AAT81149." evidence="4" ref="1">
    <original>T</original>
    <variation>A</variation>
    <location>
        <position position="325"/>
    </location>
</feature>
<keyword id="KW-1003">Cell membrane</keyword>
<keyword id="KW-0472">Membrane</keyword>
<keyword id="KW-1185">Reference proteome</keyword>
<keyword id="KW-0812">Transmembrane</keyword>
<keyword id="KW-1133">Transmembrane helix</keyword>
<name>PALH_BOTFB</name>
<evidence type="ECO:0000250" key="1"/>
<evidence type="ECO:0000255" key="2"/>
<evidence type="ECO:0000256" key="3">
    <source>
        <dbReference type="SAM" id="MobiDB-lite"/>
    </source>
</evidence>
<evidence type="ECO:0000305" key="4"/>
<reference key="1">
    <citation type="journal article" date="2004" name="Curr. Genet.">
        <title>Single oligonucleotide nested PCR: a rapid method for the isolation of genes and their flanking regions from expressed sequence tags.</title>
        <authorList>
            <person name="Antal Z."/>
            <person name="Rascle C."/>
            <person name="Fevre M."/>
            <person name="Bruel C."/>
        </authorList>
    </citation>
    <scope>NUCLEOTIDE SEQUENCE [GENOMIC DNA]</scope>
</reference>
<reference key="2">
    <citation type="journal article" date="2011" name="PLoS Genet.">
        <title>Genomic analysis of the necrotrophic fungal pathogens Sclerotinia sclerotiorum and Botrytis cinerea.</title>
        <authorList>
            <person name="Amselem J."/>
            <person name="Cuomo C.A."/>
            <person name="van Kan J.A.L."/>
            <person name="Viaud M."/>
            <person name="Benito E.P."/>
            <person name="Couloux A."/>
            <person name="Coutinho P.M."/>
            <person name="de Vries R.P."/>
            <person name="Dyer P.S."/>
            <person name="Fillinger S."/>
            <person name="Fournier E."/>
            <person name="Gout L."/>
            <person name="Hahn M."/>
            <person name="Kohn L."/>
            <person name="Lapalu N."/>
            <person name="Plummer K.M."/>
            <person name="Pradier J.-M."/>
            <person name="Quevillon E."/>
            <person name="Sharon A."/>
            <person name="Simon A."/>
            <person name="ten Have A."/>
            <person name="Tudzynski B."/>
            <person name="Tudzynski P."/>
            <person name="Wincker P."/>
            <person name="Andrew M."/>
            <person name="Anthouard V."/>
            <person name="Beever R.E."/>
            <person name="Beffa R."/>
            <person name="Benoit I."/>
            <person name="Bouzid O."/>
            <person name="Brault B."/>
            <person name="Chen Z."/>
            <person name="Choquer M."/>
            <person name="Collemare J."/>
            <person name="Cotton P."/>
            <person name="Danchin E.G."/>
            <person name="Da Silva C."/>
            <person name="Gautier A."/>
            <person name="Giraud C."/>
            <person name="Giraud T."/>
            <person name="Gonzalez C."/>
            <person name="Grossetete S."/>
            <person name="Gueldener U."/>
            <person name="Henrissat B."/>
            <person name="Howlett B.J."/>
            <person name="Kodira C."/>
            <person name="Kretschmer M."/>
            <person name="Lappartient A."/>
            <person name="Leroch M."/>
            <person name="Levis C."/>
            <person name="Mauceli E."/>
            <person name="Neuveglise C."/>
            <person name="Oeser B."/>
            <person name="Pearson M."/>
            <person name="Poulain J."/>
            <person name="Poussereau N."/>
            <person name="Quesneville H."/>
            <person name="Rascle C."/>
            <person name="Schumacher J."/>
            <person name="Segurens B."/>
            <person name="Sexton A."/>
            <person name="Silva E."/>
            <person name="Sirven C."/>
            <person name="Soanes D.M."/>
            <person name="Talbot N.J."/>
            <person name="Templeton M."/>
            <person name="Yandava C."/>
            <person name="Yarden O."/>
            <person name="Zeng Q."/>
            <person name="Rollins J.A."/>
            <person name="Lebrun M.-H."/>
            <person name="Dickman M."/>
        </authorList>
    </citation>
    <scope>NUCLEOTIDE SEQUENCE [LARGE SCALE GENOMIC DNA]</scope>
    <source>
        <strain>B05.10</strain>
    </source>
</reference>
<reference key="3">
    <citation type="journal article" date="2012" name="Eukaryot. Cell">
        <title>Genome update of Botrytis cinerea strains B05.10 and T4.</title>
        <authorList>
            <person name="Staats M."/>
            <person name="van Kan J.A.L."/>
        </authorList>
    </citation>
    <scope>NUCLEOTIDE SEQUENCE [LARGE SCALE GENOMIC DNA]</scope>
    <scope>GENOME REANNOTATION</scope>
    <source>
        <strain>B05.10</strain>
    </source>
</reference>
<reference key="4">
    <citation type="journal article" date="2017" name="Mol. Plant Pathol.">
        <title>A gapless genome sequence of the fungus Botrytis cinerea.</title>
        <authorList>
            <person name="van Kan J.A.L."/>
            <person name="Stassen J.H.M."/>
            <person name="Mosbach A."/>
            <person name="van der Lee T.A.J."/>
            <person name="Faino L."/>
            <person name="Farmer A.D."/>
            <person name="Papasotiriou D.G."/>
            <person name="Zhou S."/>
            <person name="Seidl M.F."/>
            <person name="Cottam E."/>
            <person name="Edel D."/>
            <person name="Hahn M."/>
            <person name="Schwartz D.C."/>
            <person name="Dietrich R.A."/>
            <person name="Widdison S."/>
            <person name="Scalliet G."/>
        </authorList>
    </citation>
    <scope>NUCLEOTIDE SEQUENCE [LARGE SCALE GENOMIC DNA]</scope>
    <scope>GENOME REANNOTATION</scope>
    <source>
        <strain>B05.10</strain>
    </source>
</reference>
<organism>
    <name type="scientific">Botryotinia fuckeliana (strain B05.10)</name>
    <name type="common">Noble rot fungus</name>
    <name type="synonym">Botrytis cinerea</name>
    <dbReference type="NCBI Taxonomy" id="332648"/>
    <lineage>
        <taxon>Eukaryota</taxon>
        <taxon>Fungi</taxon>
        <taxon>Dikarya</taxon>
        <taxon>Ascomycota</taxon>
        <taxon>Pezizomycotina</taxon>
        <taxon>Leotiomycetes</taxon>
        <taxon>Helotiales</taxon>
        <taxon>Sclerotiniaceae</taxon>
        <taxon>Botrytis</taxon>
    </lineage>
</organism>